<reference key="1">
    <citation type="journal article" date="1990" name="Mol. Cell. Biol.">
        <title>Assembly of the Alu domain of the signal recognition particle (SRP): dimerization of the two protein components is required for efficient binding to SRP RNA.</title>
        <authorList>
            <person name="Strub K."/>
            <person name="Walter P."/>
        </authorList>
    </citation>
    <scope>NUCLEOTIDE SEQUENCE [MRNA]</scope>
    <scope>PROTEIN SEQUENCE OF 2-32</scope>
</reference>
<reference key="2">
    <citation type="journal article" date="1980" name="Proc. Natl. Acad. Sci. U.S.A.">
        <title>Purification of a membrane-associated protein complex required for protein translocation across the endoplasmic reticulum.</title>
        <authorList>
            <person name="Walter P."/>
            <person name="Blobel G."/>
        </authorList>
    </citation>
    <scope>FUNCTION</scope>
    <scope>IDENTIFICATION IN A SIGNAL RECOGNITION PARTICLE COMPLEX</scope>
</reference>
<reference key="3">
    <citation type="journal article" date="1983" name="Cell">
        <title>Disassembly and reconstitution of signal recognition particle.</title>
        <authorList>
            <person name="Walter P."/>
            <person name="Blobel G."/>
        </authorList>
    </citation>
    <scope>FUNCTION</scope>
    <scope>RNA BINDING</scope>
    <scope>SUBUNIT</scope>
</reference>
<accession>P21262</accession>
<dbReference type="EMBL" id="M34952">
    <property type="protein sequence ID" value="AAA30897.1"/>
    <property type="molecule type" value="mRNA"/>
</dbReference>
<dbReference type="PIR" id="A34731">
    <property type="entry name" value="A34731"/>
</dbReference>
<dbReference type="PDB" id="4UE5">
    <property type="method" value="EM"/>
    <property type="resolution" value="9.00 A"/>
    <property type="chains" value="E=2-75"/>
</dbReference>
<dbReference type="PDB" id="6FRK">
    <property type="method" value="EM"/>
    <property type="resolution" value="3.70 A"/>
    <property type="chains" value="w=2-75"/>
</dbReference>
<dbReference type="PDB" id="7OBR">
    <property type="method" value="EM"/>
    <property type="resolution" value="2.80 A"/>
    <property type="chains" value="w=1-86"/>
</dbReference>
<dbReference type="PDBsum" id="4UE5"/>
<dbReference type="PDBsum" id="6FRK"/>
<dbReference type="PDBsum" id="7OBR"/>
<dbReference type="EMDB" id="EMD-12801"/>
<dbReference type="EMDB" id="EMD-4300"/>
<dbReference type="SMR" id="P21262"/>
<dbReference type="FunCoup" id="P21262">
    <property type="interactions" value="2040"/>
</dbReference>
<dbReference type="STRING" id="9615.ENSCAFP00000023824"/>
<dbReference type="PaxDb" id="9612-ENSCAFP00000023824"/>
<dbReference type="eggNOG" id="KOG3465">
    <property type="taxonomic scope" value="Eukaryota"/>
</dbReference>
<dbReference type="InParanoid" id="P21262"/>
<dbReference type="OrthoDB" id="360923at2759"/>
<dbReference type="EvolutionaryTrace" id="P21262"/>
<dbReference type="Proteomes" id="UP000002254">
    <property type="component" value="Unplaced"/>
</dbReference>
<dbReference type="Proteomes" id="UP000694429">
    <property type="component" value="Unplaced"/>
</dbReference>
<dbReference type="Proteomes" id="UP000694542">
    <property type="component" value="Unplaced"/>
</dbReference>
<dbReference type="Proteomes" id="UP000805418">
    <property type="component" value="Unplaced"/>
</dbReference>
<dbReference type="GO" id="GO:0005829">
    <property type="term" value="C:cytosol"/>
    <property type="evidence" value="ECO:0000304"/>
    <property type="project" value="Reactome"/>
</dbReference>
<dbReference type="GO" id="GO:0005786">
    <property type="term" value="C:signal recognition particle, endoplasmic reticulum targeting"/>
    <property type="evidence" value="ECO:0000318"/>
    <property type="project" value="GO_Central"/>
</dbReference>
<dbReference type="GO" id="GO:0008312">
    <property type="term" value="F:7S RNA binding"/>
    <property type="evidence" value="ECO:0007669"/>
    <property type="project" value="InterPro"/>
</dbReference>
<dbReference type="GO" id="GO:0045900">
    <property type="term" value="P:negative regulation of translational elongation"/>
    <property type="evidence" value="ECO:0007669"/>
    <property type="project" value="InterPro"/>
</dbReference>
<dbReference type="GO" id="GO:0006614">
    <property type="term" value="P:SRP-dependent cotranslational protein targeting to membrane"/>
    <property type="evidence" value="ECO:0000318"/>
    <property type="project" value="GO_Central"/>
</dbReference>
<dbReference type="FunFam" id="3.30.720.10:FF:000001">
    <property type="entry name" value="Signal recognition particle 9 kDa protein"/>
    <property type="match status" value="1"/>
</dbReference>
<dbReference type="Gene3D" id="3.30.720.10">
    <property type="entry name" value="Signal recognition particle alu RNA binding heterodimer, srp9/1"/>
    <property type="match status" value="1"/>
</dbReference>
<dbReference type="InterPro" id="IPR009018">
    <property type="entry name" value="Signal_recog_particle_SRP9/14"/>
</dbReference>
<dbReference type="InterPro" id="IPR008832">
    <property type="entry name" value="SRP9"/>
</dbReference>
<dbReference type="InterPro" id="IPR039914">
    <property type="entry name" value="SRP9-like"/>
</dbReference>
<dbReference type="InterPro" id="IPR039432">
    <property type="entry name" value="SRP9_dom"/>
</dbReference>
<dbReference type="PANTHER" id="PTHR12834">
    <property type="entry name" value="SIGNAL RECOGNITION PARTICLE 9 KDA PROTEIN"/>
    <property type="match status" value="1"/>
</dbReference>
<dbReference type="PANTHER" id="PTHR12834:SF12">
    <property type="entry name" value="SIGNAL RECOGNITION PARTICLE 9 KDA PROTEIN"/>
    <property type="match status" value="1"/>
</dbReference>
<dbReference type="Pfam" id="PF05486">
    <property type="entry name" value="SRP9-21"/>
    <property type="match status" value="1"/>
</dbReference>
<dbReference type="PIRSF" id="PIRSF017029">
    <property type="entry name" value="Signal_recog_particle_SRP9"/>
    <property type="match status" value="1"/>
</dbReference>
<dbReference type="SUPFAM" id="SSF54762">
    <property type="entry name" value="Signal recognition particle alu RNA binding heterodimer, SRP9/14"/>
    <property type="match status" value="1"/>
</dbReference>
<organism>
    <name type="scientific">Canis lupus familiaris</name>
    <name type="common">Dog</name>
    <name type="synonym">Canis familiaris</name>
    <dbReference type="NCBI Taxonomy" id="9615"/>
    <lineage>
        <taxon>Eukaryota</taxon>
        <taxon>Metazoa</taxon>
        <taxon>Chordata</taxon>
        <taxon>Craniata</taxon>
        <taxon>Vertebrata</taxon>
        <taxon>Euteleostomi</taxon>
        <taxon>Mammalia</taxon>
        <taxon>Eutheria</taxon>
        <taxon>Laurasiatheria</taxon>
        <taxon>Carnivora</taxon>
        <taxon>Caniformia</taxon>
        <taxon>Canidae</taxon>
        <taxon>Canis</taxon>
    </lineage>
</organism>
<protein>
    <recommendedName>
        <fullName>Signal recognition particle 9 kDa protein</fullName>
        <shortName>SRP9</shortName>
    </recommendedName>
</protein>
<gene>
    <name type="primary">SRP9</name>
</gene>
<sequence>MAQYQTWEEFSRAAEKLYLADPMKARVVLKYRHSDGSLCIKVTDDLVCLVYRTDQAQDVKKIEKFHSQLMRLMVAKESRSVAMETD</sequence>
<evidence type="ECO:0000269" key="1">
    <source>
    </source>
</evidence>
<evidence type="ECO:0000269" key="2">
    <source>
    </source>
</evidence>
<evidence type="ECO:0000269" key="3">
    <source>
    </source>
</evidence>
<evidence type="ECO:0000305" key="4"/>
<comment type="function">
    <text evidence="2 3">Component of the signal recognition particle (SRP) complex, a ribonucleoprotein complex that mediates the cotranslational targeting of secretory and membrane proteins to the endoplasmic reticulum (ER) (PubMed:6413076, PubMed:6938958). SRP9 together with SRP14 and the Alu portion of the SRP RNA, constitutes the elongation arrest domain of SRP (PubMed:6413076, PubMed:6938958). The complex of SRP9 and SRP14 is required for SRP RNA binding (PubMed:6413076, PubMed:6938958).</text>
</comment>
<comment type="subunit">
    <text evidence="2 3">Heterodimer with SRP14; binds RNA as heterodimer (PubMed:6413076). Component of a signal recognition particle complex that consists of a 7SL RNA molecule of 300 nucleotides and six protein subunits: SRP72, SRP68, SRP54, SRP19, SRP14 and SRP9 (PubMed:6413076, PubMed:6938958).</text>
</comment>
<comment type="subcellular location">
    <subcellularLocation>
        <location>Cytoplasm</location>
    </subcellularLocation>
</comment>
<comment type="similarity">
    <text evidence="4">Belongs to the SRP9 family.</text>
</comment>
<proteinExistence type="evidence at protein level"/>
<feature type="initiator methionine" description="Removed" evidence="1">
    <location>
        <position position="1"/>
    </location>
</feature>
<feature type="chain" id="PRO_0000135181" description="Signal recognition particle 9 kDa protein">
    <location>
        <begin position="2"/>
        <end position="86"/>
    </location>
</feature>
<name>SRP09_CANLF</name>
<keyword id="KW-0002">3D-structure</keyword>
<keyword id="KW-0963">Cytoplasm</keyword>
<keyword id="KW-0903">Direct protein sequencing</keyword>
<keyword id="KW-1185">Reference proteome</keyword>
<keyword id="KW-0687">Ribonucleoprotein</keyword>
<keyword id="KW-0694">RNA-binding</keyword>
<keyword id="KW-0733">Signal recognition particle</keyword>